<reference key="1">
    <citation type="submission" date="2004-11" db="EMBL/GenBank/DDBJ databases">
        <title>A novel gene containing Xin repeat.</title>
        <authorList>
            <person name="Luo J."/>
            <person name="Liu M."/>
            <person name="Wu X."/>
        </authorList>
    </citation>
    <scope>NUCLEOTIDE SEQUENCE [MRNA]</scope>
</reference>
<reference key="2">
    <citation type="journal article" date="2008" name="J. Proteome Res.">
        <title>Online automated in vivo zebrafish phosphoproteomics: from large-scale analysis down to a single embryo.</title>
        <authorList>
            <person name="Lemeer S."/>
            <person name="Pinkse M.W.H."/>
            <person name="Mohammed S."/>
            <person name="van Breukelen B."/>
            <person name="den Hertog J."/>
            <person name="Slijper M."/>
            <person name="Heck A.J.R."/>
        </authorList>
    </citation>
    <scope>PHOSPHORYLATION [LARGE SCALE ANALYSIS] AT SER-952</scope>
    <scope>IDENTIFICATION BY MASS SPECTROMETRY</scope>
    <source>
        <tissue>Embryo</tissue>
    </source>
</reference>
<reference key="3">
    <citation type="journal article" date="2008" name="PLoS ONE">
        <title>Emergence of Xin demarcates a key innovation in heart evolution.</title>
        <authorList>
            <person name="Grosskurth S.E."/>
            <person name="Bhattacharya D."/>
            <person name="Wang Q."/>
            <person name="Lin J.J."/>
        </authorList>
    </citation>
    <scope>SUBCELLULAR LOCATION</scope>
    <scope>TISSUE SPECIFICITY</scope>
</reference>
<reference key="4">
    <citation type="journal article" date="2012" name="PLoS ONE">
        <title>Xirp proteins mark injured skeletal muscle in zebrafish.</title>
        <authorList>
            <person name="Otten C."/>
            <person name="van der Ven P.F."/>
            <person name="Lewrenz I."/>
            <person name="Paul S."/>
            <person name="Steinhagen A."/>
            <person name="Busch-Nentwich E."/>
            <person name="Eichhorst J."/>
            <person name="Wiesner B."/>
            <person name="Stemple D."/>
            <person name="Straehle U."/>
            <person name="Fuerst D.O."/>
            <person name="Abdelilah-Seyfried S."/>
        </authorList>
    </citation>
    <scope>DEVELOPMENTAL STAGE</scope>
    <scope>INDUCTION BY GALANTHAMINE AND MUSCLE INJURY</scope>
    <scope>DISRUPTION PHENOTYPE</scope>
</reference>
<reference key="5">
    <citation type="journal article" date="2019" name="Glia">
        <title>Genetic control of cellular morphogenesis in Mueller glia.</title>
        <authorList>
            <person name="Charlton-Perkins M."/>
            <person name="Almeida A.D."/>
            <person name="MacDonald R.B."/>
            <person name="Harris W.A."/>
        </authorList>
    </citation>
    <scope>FUNCTION</scope>
    <scope>DEVELOPMENTAL STAGE</scope>
    <scope>DISRUPTION PHENOTYPE</scope>
</reference>
<protein>
    <recommendedName>
        <fullName>Xin actin-binding repeat-containing protein 1</fullName>
    </recommendedName>
    <alternativeName>
        <fullName>Cardiomyopathy-associated protein 1</fullName>
    </alternativeName>
</protein>
<keyword id="KW-0009">Actin-binding</keyword>
<keyword id="KW-0965">Cell junction</keyword>
<keyword id="KW-0597">Phosphoprotein</keyword>
<keyword id="KW-1185">Reference proteome</keyword>
<keyword id="KW-0677">Repeat</keyword>
<gene>
    <name evidence="2" type="primary">xirp1</name>
    <name evidence="2" type="synonym">cmya1</name>
    <name evidence="2" type="synonym">xin</name>
</gene>
<feature type="chain" id="PRO_0000316986" description="Xin actin-binding repeat-containing protein 1">
    <location>
        <begin position="1"/>
        <end position="2297"/>
    </location>
</feature>
<feature type="repeat" description="Xin 1">
    <location>
        <begin position="104"/>
        <end position="119"/>
    </location>
</feature>
<feature type="repeat" description="Xin 2">
    <location>
        <begin position="139"/>
        <end position="154"/>
    </location>
</feature>
<feature type="repeat" description="Xin 3">
    <location>
        <begin position="169"/>
        <end position="184"/>
    </location>
</feature>
<feature type="repeat" description="Xin 4">
    <location>
        <begin position="208"/>
        <end position="223"/>
    </location>
</feature>
<feature type="repeat" description="Xin 5">
    <location>
        <begin position="248"/>
        <end position="263"/>
    </location>
</feature>
<feature type="repeat" description="Xin 6">
    <location>
        <begin position="286"/>
        <end position="301"/>
    </location>
</feature>
<feature type="repeat" description="Xin 7">
    <location>
        <begin position="323"/>
        <end position="338"/>
    </location>
</feature>
<feature type="repeat" description="Xin 8">
    <location>
        <begin position="362"/>
        <end position="377"/>
    </location>
</feature>
<feature type="repeat" description="Xin 9">
    <location>
        <begin position="396"/>
        <end position="411"/>
    </location>
</feature>
<feature type="repeat" description="Xin 10">
    <location>
        <begin position="464"/>
        <end position="479"/>
    </location>
</feature>
<feature type="repeat" description="Xin 11">
    <location>
        <begin position="494"/>
        <end position="509"/>
    </location>
</feature>
<feature type="repeat" description="Xin 12">
    <location>
        <begin position="532"/>
        <end position="547"/>
    </location>
</feature>
<feature type="repeat" description="Xin 13">
    <location>
        <begin position="570"/>
        <end position="585"/>
    </location>
</feature>
<feature type="repeat" description="Xin 14">
    <location>
        <begin position="605"/>
        <end position="620"/>
    </location>
</feature>
<feature type="repeat" description="Xin 15">
    <location>
        <begin position="638"/>
        <end position="653"/>
    </location>
</feature>
<feature type="repeat" description="Xin 16">
    <location>
        <begin position="677"/>
        <end position="692"/>
    </location>
</feature>
<feature type="repeat" description="Xin 17">
    <location>
        <begin position="715"/>
        <end position="730"/>
    </location>
</feature>
<feature type="repeat" description="Xin 18">
    <location>
        <begin position="747"/>
        <end position="762"/>
    </location>
</feature>
<feature type="repeat" description="Xin 19">
    <location>
        <begin position="779"/>
        <end position="794"/>
    </location>
</feature>
<feature type="repeat" description="Xin 20">
    <location>
        <begin position="818"/>
        <end position="833"/>
    </location>
</feature>
<feature type="repeat" description="Xin 21">
    <location>
        <begin position="856"/>
        <end position="871"/>
    </location>
</feature>
<feature type="repeat" description="Xin 22">
    <location>
        <begin position="893"/>
        <end position="908"/>
    </location>
</feature>
<feature type="repeat" description="Xin 23">
    <location>
        <begin position="928"/>
        <end position="943"/>
    </location>
</feature>
<feature type="repeat" description="Xin 24">
    <location>
        <begin position="959"/>
        <end position="974"/>
    </location>
</feature>
<feature type="repeat" description="Xin 25">
    <location>
        <begin position="997"/>
        <end position="1012"/>
    </location>
</feature>
<feature type="repeat" description="Xin 26">
    <location>
        <begin position="1033"/>
        <end position="1048"/>
    </location>
</feature>
<feature type="region of interest" description="Disordered" evidence="4">
    <location>
        <begin position="1"/>
        <end position="28"/>
    </location>
</feature>
<feature type="region of interest" description="Disordered" evidence="4">
    <location>
        <begin position="433"/>
        <end position="461"/>
    </location>
</feature>
<feature type="region of interest" description="Disordered" evidence="4">
    <location>
        <begin position="1617"/>
        <end position="1680"/>
    </location>
</feature>
<feature type="region of interest" description="Disordered" evidence="4">
    <location>
        <begin position="1866"/>
        <end position="1900"/>
    </location>
</feature>
<feature type="region of interest" description="Disordered" evidence="4">
    <location>
        <begin position="2147"/>
        <end position="2191"/>
    </location>
</feature>
<feature type="region of interest" description="Disordered" evidence="4">
    <location>
        <begin position="2243"/>
        <end position="2297"/>
    </location>
</feature>
<feature type="compositionally biased region" description="Basic and acidic residues" evidence="4">
    <location>
        <begin position="1"/>
        <end position="11"/>
    </location>
</feature>
<feature type="compositionally biased region" description="Basic and acidic residues" evidence="4">
    <location>
        <begin position="433"/>
        <end position="442"/>
    </location>
</feature>
<feature type="compositionally biased region" description="Low complexity" evidence="4">
    <location>
        <begin position="1618"/>
        <end position="1630"/>
    </location>
</feature>
<feature type="compositionally biased region" description="Low complexity" evidence="4">
    <location>
        <begin position="1644"/>
        <end position="1656"/>
    </location>
</feature>
<feature type="compositionally biased region" description="Basic and acidic residues" evidence="4">
    <location>
        <begin position="1876"/>
        <end position="1885"/>
    </location>
</feature>
<feature type="compositionally biased region" description="Basic and acidic residues" evidence="4">
    <location>
        <begin position="2151"/>
        <end position="2162"/>
    </location>
</feature>
<feature type="compositionally biased region" description="Low complexity" evidence="4">
    <location>
        <begin position="2166"/>
        <end position="2180"/>
    </location>
</feature>
<feature type="compositionally biased region" description="Polar residues" evidence="4">
    <location>
        <begin position="2259"/>
        <end position="2278"/>
    </location>
</feature>
<feature type="modified residue" description="Phosphoserine" evidence="5">
    <location>
        <position position="952"/>
    </location>
</feature>
<organism>
    <name type="scientific">Danio rerio</name>
    <name type="common">Zebrafish</name>
    <name type="synonym">Brachydanio rerio</name>
    <dbReference type="NCBI Taxonomy" id="7955"/>
    <lineage>
        <taxon>Eukaryota</taxon>
        <taxon>Metazoa</taxon>
        <taxon>Chordata</taxon>
        <taxon>Craniata</taxon>
        <taxon>Vertebrata</taxon>
        <taxon>Euteleostomi</taxon>
        <taxon>Actinopterygii</taxon>
        <taxon>Neopterygii</taxon>
        <taxon>Teleostei</taxon>
        <taxon>Ostariophysi</taxon>
        <taxon>Cypriniformes</taxon>
        <taxon>Danionidae</taxon>
        <taxon>Danioninae</taxon>
        <taxon>Danio</taxon>
    </lineage>
</organism>
<comment type="function">
    <text evidence="1 2 8">Positively regulates organization of the outer plexiform layer and Muller glia cells in the retina (PubMed:30924555). May protect actin filaments from depolymerization (By similarity). May play a role in development of normal skeletal muscle morphology and muscle fiber type composition (By similarity).</text>
</comment>
<comment type="subcellular location">
    <subcellularLocation>
        <location evidence="6">Cell junction</location>
        <location evidence="6">Adherens junction</location>
    </subcellularLocation>
    <subcellularLocation>
        <location evidence="6">Cell junction</location>
        <location evidence="6">Desmosome</location>
    </subcellularLocation>
    <text evidence="2">Colocalizes with actin stress fibers.</text>
</comment>
<comment type="tissue specificity">
    <text evidence="6">Expressed at intercalated disks in the heart (at protein level).</text>
</comment>
<comment type="developmental stage">
    <text evidence="7 8">Expressed at the myotendinous junctions and Z-disks in all striated muscles and the heart from 20 hpf and into adulthood (PubMed:22355335). Abundantly expressed in the eye from 60 to 192 hpf (PubMed:30924555).</text>
</comment>
<comment type="induction">
    <text evidence="7">Induced in muscle cells by the acetylcholinesterase inhibitor Galanthamine (PubMed:22355335). Induced in areas of myofibrillar remodeling by laser-derived muscle injury (PubMed:22355335).</text>
</comment>
<comment type="domain">
    <text evidence="3">Xin repeats bind F-actin.</text>
</comment>
<comment type="disruption phenotype">
    <text evidence="7 8">No generalized developmental defects and adults are viable and fertile (PubMed:22355335). Defects in the retinal outer plexiform layer and abnormal organization of Muller glia cells (PubMed:30924555). Early stages of cardiac morphogenesis and myofibrillogenesis are normal (PubMed:22355335). No effect on laser-induced muscle wound recovery (PubMed:22355335).</text>
</comment>
<comment type="similarity">
    <text evidence="3">Belongs to the Xin family.</text>
</comment>
<comment type="caution">
    <text evidence="7">Has been shown to play no essential role in cardiac development, unlike in orthologs.</text>
</comment>
<sequence>MAEVAKQKKATEAVCGDEDFPPPPPPLPRPQVLESLQKDLSQNFLPVPPPKETFSEIYQQRQKSELKRLFKHIHPELKMTVDDVVDDELIDAINPQAADAAYQGEVQSMRWIFENWTLDNIGDPHETKKLLCEENPQGGDVKGKSSLFEHSTFDSQHAAGAERAGVVRGDVRTATWLFETQPLDSISKSKIEDEEIVEVVLKEPVQKGDVTGARRLFETKPLDSLGRCCSVEDQHFLTLKSELQENKGDVKKTVKLFQADPCCALRDSNGKIHEIKSICREEIMSSDFKTARWLFETQPLDHINEGAHVQIIRGISLEEAQRGGVDKKKWMFETQPLDAIHEGVVEEQKFQGTAVEGFSGAADVHNKLQLFENQPLSSLKGDSEGDVLEKEAIVGGNVGSTLWLFETQPMDTLKDSYEVGRLQKVMVSSDEKGEVQDKRMQFEKSTAGKTAGDSGNKVQNDEKGDVKTFKSLFETLPLNVSEKAQSQIHDITSGDVKGHCSLFETTPLYAIKDCAGKFHEVTTVSREECIKGNVQNYKWMFETRPLDQFEEGSGKVELIKGITRQEDMTDDTRTAKWMFETQPLDCMSLNSRTDVDSTQKEFKKSNVKTCKWLFETKPMDMLYEKSEGKQDVEPVPKADVKSHTWLFETQPLDNIKDKENLGLKLCSTVQEDVKSDVNVKTVKHLFETEPLDRITDQADSGQNVRCVSQVDMQSGDVSRVKEIFESKSLGTESSKWSEEQKNEIQSGSVHKFTWLFENQPIGDINEKEERIVSCDVEAGDVGGKKFIFETLSLDKIKDKDELLEHPSMIIEKPLSSSVNVKSNTMLFESQPLYAIRDKDGQFHEVTTVMKEEVMRGDVRGARWMFETKPLDTIQADKEIYVIRAVTQEDVHKGDVKSARWKFETQPLDSFTPHEGPSVRVVEDIGNEKCVQQSRQLFETEQASQKKFVRMVSVTDVQQGDVRTSTWLFENQPIDTLKGEPDEQNNLTAVHREDNTKGDVKRCTWLFESQSLDKIKDNKPTEELVSSREEIPKADVKSTTWLFETTPLDKITVESVTDILYRLCHNSFIHSSGIIIQANDYKYVNMAKYQIMKDEGPKVLKEEVVEGNIRNLMLQLLFKPNIKPMVVLLKEDEQGKMHSTVLEIPFQQPGSATNPEAECKTQEAVKIIENLLVQQKEIKTGLVMQESEGGQPEMTVYSLHCESSLTESQTITRGDVKSTIGNLLATVHSQQTKQSCRMEEIERGNVNLYKSCIEKGDLKSLQRELSEEDLVTSCRDQIEIVQGDVKEAMRHLSQQREQVERTILDVVPGDVKNVKKVFSDVCTDLSIGNCVPREEIVRGDILSAKQQLGEAVKQQVMVQKEEIVSGDIKATLESLERAKQQSMQVEREVIKPGTIYDLNVEAEEMCSEENESKLVKEEIIPGDIKAAKRSLERAKNQSMKVEREPITPGKLYNLNETSQCQSSTTVEQSTTSTYSNHRITTTFRKVSDIEKDQESIKRLCCLNEVGGGGKNIYINTEDALRMVDISESVPDVVKGDVKATIQSLRSASTEQRSVDREEIVRGNMQETLQCLKKSSINISRGDYKAAMLYKQSGQPYTQSKITNDSGTKDCKQSFDHIPSSHTQLSSSVSVTRSEHPTSLALNSESVSSNADNSKNSSAFTGKDEHPPPILPKTGHQVKDQKPVIPPKPLHITTSSPPLFTETSNMCPNSTVSINDTQQTPAIPLKVTPSNKMFTHETEIAKTSNKIKDKESKIHEQVQRTNLTDPTDFQRMQYTEQWVQNSHMQITDTPSVNKTDSFKNGSFPGDSIGMEKNVVQRINAAEEIRMCYSKDNDELNKGFKAVLQNFGEKKTTTDTGSPFPKKIKVVQKENIQEQAKTSNKDELHFTSRDTSSTPNKHEVPSIHNNSENKVVLREKKAKRETEDERRQRLSIHRDEIMRGNVKAAMEIFENLMRREELKVILSKVQEIEGETFEVDVRSLKTLFENVPAWITNPKENTKRRHRPRVAKETEGLRDDLESISSVEAAFEDLEKASMDIVNLKEQTLAKLLDIEEAIKKALYSVSNLKSEADIAGLSGLFSESLSPDNVSPSTKNIRKISIVSSKTKPAQSNQMQSADNRALYKEVPHVPQVQVSKQSSNVPSSPSFISIHSAARKPAESPTDKPKTNADQSNAGSSSSQNSSASHICSPPSPRRKVSVLEVQRVPEVPSGIFGTKTVSEKYEETDCFGNTYYSSKRSTFVTRQSETELSSSYDVVTSPRRSEGMTSPVLQRSGQSFSSNSLSKGKDRKVFVTFGHPNTEKH</sequence>
<dbReference type="EMBL" id="AY812746">
    <property type="protein sequence ID" value="AAV68693.1"/>
    <property type="molecule type" value="mRNA"/>
</dbReference>
<dbReference type="RefSeq" id="NP_001012377.1">
    <property type="nucleotide sequence ID" value="NM_001012377.1"/>
</dbReference>
<dbReference type="RefSeq" id="XP_009296785.1">
    <property type="nucleotide sequence ID" value="XM_009298510.3"/>
</dbReference>
<dbReference type="SMR" id="Q5PZ43"/>
<dbReference type="STRING" id="7955.ENSDARP00000042412"/>
<dbReference type="iPTMnet" id="Q5PZ43"/>
<dbReference type="PaxDb" id="7955-ENSDARP00000042412"/>
<dbReference type="Ensembl" id="ENSDART00000042413">
    <property type="protein sequence ID" value="ENSDARP00000042412"/>
    <property type="gene ID" value="ENSDARG00000030722"/>
</dbReference>
<dbReference type="GeneID" id="497637"/>
<dbReference type="KEGG" id="dre:497637"/>
<dbReference type="AGR" id="ZFIN:ZDB-GENE-050221-2"/>
<dbReference type="CTD" id="165904"/>
<dbReference type="ZFIN" id="ZDB-GENE-050221-2">
    <property type="gene designation" value="xirp1"/>
</dbReference>
<dbReference type="eggNOG" id="ENOG502QTAC">
    <property type="taxonomic scope" value="Eukaryota"/>
</dbReference>
<dbReference type="HOGENOM" id="CLU_001095_0_0_1"/>
<dbReference type="InParanoid" id="Q5PZ43"/>
<dbReference type="OrthoDB" id="6129702at2759"/>
<dbReference type="PhylomeDB" id="Q5PZ43"/>
<dbReference type="TreeFam" id="TF330745"/>
<dbReference type="PRO" id="PR:Q5PZ43"/>
<dbReference type="Proteomes" id="UP000000437">
    <property type="component" value="Chromosome 2"/>
</dbReference>
<dbReference type="Bgee" id="ENSDARG00000030722">
    <property type="expression patterns" value="Expressed in cardiac ventricle and 21 other cell types or tissues"/>
</dbReference>
<dbReference type="ExpressionAtlas" id="Q5PZ43">
    <property type="expression patterns" value="baseline and differential"/>
</dbReference>
<dbReference type="GO" id="GO:0005912">
    <property type="term" value="C:adherens junction"/>
    <property type="evidence" value="ECO:0000314"/>
    <property type="project" value="UniProtKB"/>
</dbReference>
<dbReference type="GO" id="GO:0030057">
    <property type="term" value="C:desmosome"/>
    <property type="evidence" value="ECO:0000314"/>
    <property type="project" value="UniProtKB"/>
</dbReference>
<dbReference type="GO" id="GO:0014704">
    <property type="term" value="C:intercalated disc"/>
    <property type="evidence" value="ECO:0000314"/>
    <property type="project" value="UniProtKB"/>
</dbReference>
<dbReference type="GO" id="GO:0051015">
    <property type="term" value="F:actin filament binding"/>
    <property type="evidence" value="ECO:0000318"/>
    <property type="project" value="GO_Central"/>
</dbReference>
<dbReference type="GO" id="GO:0007015">
    <property type="term" value="P:actin filament organization"/>
    <property type="evidence" value="ECO:0000318"/>
    <property type="project" value="GO_Central"/>
</dbReference>
<dbReference type="GO" id="GO:0010842">
    <property type="term" value="P:retina layer formation"/>
    <property type="evidence" value="ECO:0000315"/>
    <property type="project" value="UniProtKB"/>
</dbReference>
<dbReference type="InterPro" id="IPR012510">
    <property type="entry name" value="Actin-binding_Xin_repeat"/>
</dbReference>
<dbReference type="InterPro" id="IPR030072">
    <property type="entry name" value="XIRP1/XIRP2"/>
</dbReference>
<dbReference type="PANTHER" id="PTHR22591">
    <property type="entry name" value="XIN"/>
    <property type="match status" value="1"/>
</dbReference>
<dbReference type="PANTHER" id="PTHR22591:SF2">
    <property type="entry name" value="XIN ACTIN-BINDING REPEAT-CONTAINING PROTEIN 1"/>
    <property type="match status" value="1"/>
</dbReference>
<dbReference type="Pfam" id="PF08043">
    <property type="entry name" value="Xin"/>
    <property type="match status" value="14"/>
</dbReference>
<dbReference type="PROSITE" id="PS51389">
    <property type="entry name" value="XIN"/>
    <property type="match status" value="26"/>
</dbReference>
<evidence type="ECO:0000250" key="1">
    <source>
        <dbReference type="UniProtKB" id="O70373"/>
    </source>
</evidence>
<evidence type="ECO:0000250" key="2">
    <source>
        <dbReference type="UniProtKB" id="Q702N8"/>
    </source>
</evidence>
<evidence type="ECO:0000255" key="3">
    <source>
        <dbReference type="PROSITE-ProRule" id="PRU00721"/>
    </source>
</evidence>
<evidence type="ECO:0000256" key="4">
    <source>
        <dbReference type="SAM" id="MobiDB-lite"/>
    </source>
</evidence>
<evidence type="ECO:0000269" key="5">
    <source>
    </source>
</evidence>
<evidence type="ECO:0000269" key="6">
    <source>
    </source>
</evidence>
<evidence type="ECO:0000269" key="7">
    <source>
    </source>
</evidence>
<evidence type="ECO:0000269" key="8">
    <source>
    </source>
</evidence>
<name>XIRP1_DANRE</name>
<accession>Q5PZ43</accession>
<proteinExistence type="evidence at protein level"/>